<protein>
    <recommendedName>
        <fullName evidence="5">Lipopolysaccharide core galacturonosyltransferase RgtB</fullName>
        <shortName evidence="5">LPS core GalA transferase RgtB</shortName>
        <ecNumber evidence="2">2.4.1.-</ecNumber>
    </recommendedName>
    <alternativeName>
        <fullName evidence="10">Dodecaprenyl phosphate-beta-galacturonate:lipopolysaccharide core alpha-galacturonosyltransferase RgtB</fullName>
        <shortName evidence="8 10">Dodecaprenyl-P-GalA:LPS core galacturonosyltransferase RgtB</shortName>
    </alternativeName>
    <alternativeName>
        <fullName evidence="6">Galacturonic acid transferase RgtB</fullName>
        <shortName evidence="6">GalAT RgtB</shortName>
    </alternativeName>
</protein>
<organism>
    <name type="scientific">Rhizobium johnstonii (strain DSM 114642 / LMG 32736 / 3841)</name>
    <name type="common">Rhizobium leguminosarum bv. viciae</name>
    <dbReference type="NCBI Taxonomy" id="216596"/>
    <lineage>
        <taxon>Bacteria</taxon>
        <taxon>Pseudomonadati</taxon>
        <taxon>Pseudomonadota</taxon>
        <taxon>Alphaproteobacteria</taxon>
        <taxon>Hyphomicrobiales</taxon>
        <taxon>Rhizobiaceae</taxon>
        <taxon>Rhizobium/Agrobacterium group</taxon>
        <taxon>Rhizobium</taxon>
        <taxon>Rhizobium johnstonii</taxon>
    </lineage>
</organism>
<comment type="function">
    <text evidence="2 3 4">Involved in the modification of the lipopolysaccharide (LPS) inner core. Catalyzes the transfer of a galacturonic acid (GalA) residue to the 5-position of the outer Kdo (3-deoxy-D-manno-octulosonic acid) residue of the LPS inner core, using dodecaprenyl phosphate-GalA as the donor substrate. Acts after the other GalA transferase RgtA.</text>
</comment>
<comment type="pathway">
    <text evidence="4 9">Bacterial outer membrane biogenesis; LPS core biosynthesis.</text>
</comment>
<comment type="subcellular location">
    <subcellularLocation>
        <location evidence="8 9">Cell inner membrane</location>
        <topology evidence="1">Multi-pass membrane protein</topology>
    </subcellularLocation>
</comment>
<comment type="disruption phenotype">
    <text evidence="4">Cells lacking this gene produce a normal lipid A structure with GalA at the 4'-position but a modified LPS core structure as this gene deletion results in addition of GalA to the 4- but not the 5-position of the outer Kdo and nearly complete addition of GalA to the Man residue. The mutant cells are also more susceptible to deoxycholic acid when compared with the parent strain, and more resistant to the polycationic antimicrobial peptide PmxB.</text>
</comment>
<comment type="similarity">
    <text evidence="7">Belongs to the glycosyltransferase 83 family.</text>
</comment>
<sequence length="494" mass="54015">MTESNRRDISWIFALLAAYFVLQVGVRLATSHSLDLDEAEQAFRSQWLAAGYGPQPPFYNWLQYTVFQFAGVSLTALSIVKNLLLFISYLLYGLTARLVLRDKALVAIATLGLLTIPQMAFEMQRDLTHTVAVFFSASIFFYGFIRSLKQPSLASYLIAGIGIGFGLLAKYNFAILPAAALIAALSDARLRPRIFDWRLGLTAAVALVITLPHLFWLKDNLDFATARTLEKMTASGDASYLTQVAMGVSSLALAIISFAALTVAVFAIVFGKSLRPALGSGSEWTRLLERMMLVFLAGILLLIVFGGAAGIKDRWLVPMLFILPLYFCLKIEAAGVETGKALRRFIPVVAVIMIGVPAALYGSVAAARFTGHYERLNRPYAGMLEILRKQAEPAAILAGDSLLAGNLRQDIPGVPILSADYPGFNPDLTSRRPLLLVWLLPKGGSEALPPDMAEWLQANLGTSAPEASVIDVPYFYGRGDDRYRFGYAWVNQPG</sequence>
<name>RGTB_RHIJ3</name>
<accession>Q1MJ97</accession>
<accession>Q20DQ3</accession>
<reference key="1">
    <citation type="journal article" date="2006" name="J. Biol. Chem.">
        <title>Expression cloning of three Rhizobium leguminosarum lipopolysaccharide core galacturonosyltransferases.</title>
        <authorList>
            <person name="Kanjilal-Kolar S."/>
            <person name="Basu S.S."/>
            <person name="Kanipes M.I."/>
            <person name="Guan Z."/>
            <person name="Garrett T.A."/>
            <person name="Raetz C.R.H."/>
        </authorList>
    </citation>
    <scope>NUCLEOTIDE SEQUENCE [GENOMIC DNA]</scope>
    <scope>FUNCTION</scope>
    <scope>SUBCELLULAR LOCATION</scope>
    <scope>PATHWAY</scope>
    <source>
        <strain evidence="11">DSM 114642 / LMG 32736 / 3841</strain>
    </source>
</reference>
<reference key="2">
    <citation type="journal article" date="2006" name="Genome Biol.">
        <title>The genome of Rhizobium leguminosarum has recognizable core and accessory components.</title>
        <authorList>
            <person name="Young J.P.W."/>
            <person name="Crossman L.C."/>
            <person name="Johnston A.W.B."/>
            <person name="Thomson N.R."/>
            <person name="Ghazoui Z.F."/>
            <person name="Hull K.H."/>
            <person name="Wexler M."/>
            <person name="Curson A.R.J."/>
            <person name="Todd J.D."/>
            <person name="Poole P.S."/>
            <person name="Mauchline T.H."/>
            <person name="East A.K."/>
            <person name="Quail M.A."/>
            <person name="Churcher C."/>
            <person name="Arrowsmith C."/>
            <person name="Cherevach I."/>
            <person name="Chillingworth T."/>
            <person name="Clarke K."/>
            <person name="Cronin A."/>
            <person name="Davis P."/>
            <person name="Fraser A."/>
            <person name="Hance Z."/>
            <person name="Hauser H."/>
            <person name="Jagels K."/>
            <person name="Moule S."/>
            <person name="Mungall K."/>
            <person name="Norbertczak H."/>
            <person name="Rabbinowitsch E."/>
            <person name="Sanders M."/>
            <person name="Simmonds M."/>
            <person name="Whitehead S."/>
            <person name="Parkhill J."/>
        </authorList>
    </citation>
    <scope>NUCLEOTIDE SEQUENCE [LARGE SCALE GENOMIC DNA]</scope>
    <source>
        <strain>DSM 114642 / LMG 32736 / 3841</strain>
    </source>
</reference>
<reference key="3">
    <citation type="journal article" date="2006" name="J. Biol. Chem.">
        <title>Dodecaprenyl phosphate-galacturonic acid as a donor substrate for lipopolysaccharide core glycosylation in Rhizobium leguminosarum.</title>
        <authorList>
            <person name="Kanjilal-Kolar S."/>
            <person name="Raetz C.R."/>
        </authorList>
    </citation>
    <scope>FUNCTION</scope>
    <scope>CATALYTIC ACTIVITY</scope>
    <scope>SUBCELLULAR LOCATION</scope>
    <source>
        <strain>DSM 114642 / LMG 32736 / 3841</strain>
    </source>
</reference>
<reference key="4">
    <citation type="journal article" date="2012" name="J. Biol. Chem.">
        <title>Characterization of galacturonosyl transferase genes rgtA, rgtB, rgtC, rgtD, and rgtE responsible for lipopolysaccharide synthesis in nitrogen-fixing endosymbiont Rhizobium leguminosarum: lipopolysaccharide core and lipid galacturonosyl residues confer membrane stability.</title>
        <authorList>
            <person name="Brown D.B."/>
            <person name="Forsberg L.S."/>
            <person name="Kannenberg E.L."/>
            <person name="Carlson R.W."/>
        </authorList>
    </citation>
    <scope>FUNCTION</scope>
    <scope>DISRUPTION PHENOTYPE</scope>
    <scope>PATHWAY</scope>
    <source>
        <strain>DSM 114642 / LMG 32736 / 3841</strain>
    </source>
</reference>
<keyword id="KW-0997">Cell inner membrane</keyword>
<keyword id="KW-1003">Cell membrane</keyword>
<keyword id="KW-0328">Glycosyltransferase</keyword>
<keyword id="KW-0448">Lipopolysaccharide biosynthesis</keyword>
<keyword id="KW-0472">Membrane</keyword>
<keyword id="KW-0808">Transferase</keyword>
<keyword id="KW-0812">Transmembrane</keyword>
<keyword id="KW-1133">Transmembrane helix</keyword>
<feature type="chain" id="PRO_0000436510" description="Lipopolysaccharide core galacturonosyltransferase RgtB">
    <location>
        <begin position="1"/>
        <end position="494"/>
    </location>
</feature>
<feature type="transmembrane region" description="Helical" evidence="1">
    <location>
        <begin position="9"/>
        <end position="29"/>
    </location>
</feature>
<feature type="transmembrane region" description="Helical" evidence="1">
    <location>
        <begin position="74"/>
        <end position="94"/>
    </location>
</feature>
<feature type="transmembrane region" description="Helical" evidence="1">
    <location>
        <begin position="104"/>
        <end position="124"/>
    </location>
</feature>
<feature type="transmembrane region" description="Helical" evidence="1">
    <location>
        <begin position="127"/>
        <end position="147"/>
    </location>
</feature>
<feature type="transmembrane region" description="Helical" evidence="1">
    <location>
        <begin position="156"/>
        <end position="176"/>
    </location>
</feature>
<feature type="transmembrane region" description="Helical" evidence="1">
    <location>
        <begin position="197"/>
        <end position="217"/>
    </location>
</feature>
<feature type="transmembrane region" description="Helical" evidence="1">
    <location>
        <begin position="251"/>
        <end position="271"/>
    </location>
</feature>
<feature type="transmembrane region" description="Helical" evidence="1">
    <location>
        <begin position="291"/>
        <end position="311"/>
    </location>
</feature>
<feature type="transmembrane region" description="Helical" evidence="1">
    <location>
        <begin position="316"/>
        <end position="336"/>
    </location>
</feature>
<feature type="transmembrane region" description="Helical" evidence="1">
    <location>
        <begin position="345"/>
        <end position="365"/>
    </location>
</feature>
<gene>
    <name evidence="5 11" type="primary">rgtB</name>
    <name evidence="12" type="ordered locus">RL1468</name>
</gene>
<proteinExistence type="evidence at protein level"/>
<dbReference type="EC" id="2.4.1.-" evidence="2"/>
<dbReference type="EMBL" id="DQ298017">
    <property type="protein sequence ID" value="ABC02170.1"/>
    <property type="molecule type" value="Genomic_DNA"/>
</dbReference>
<dbReference type="EMBL" id="AM236080">
    <property type="protein sequence ID" value="CAK06963.1"/>
    <property type="molecule type" value="Genomic_DNA"/>
</dbReference>
<dbReference type="RefSeq" id="WP_011651166.1">
    <property type="nucleotide sequence ID" value="NC_008380.1"/>
</dbReference>
<dbReference type="SMR" id="Q1MJ97"/>
<dbReference type="CAZy" id="GT83">
    <property type="family name" value="Glycosyltransferase Family 83"/>
</dbReference>
<dbReference type="EnsemblBacteria" id="CAK06963">
    <property type="protein sequence ID" value="CAK06963"/>
    <property type="gene ID" value="RL1468"/>
</dbReference>
<dbReference type="KEGG" id="rle:RL1468"/>
<dbReference type="eggNOG" id="COG1807">
    <property type="taxonomic scope" value="Bacteria"/>
</dbReference>
<dbReference type="HOGENOM" id="CLU_039820_0_0_5"/>
<dbReference type="UniPathway" id="UPA00958"/>
<dbReference type="Proteomes" id="UP000006575">
    <property type="component" value="Chromosome"/>
</dbReference>
<dbReference type="GO" id="GO:0005886">
    <property type="term" value="C:plasma membrane"/>
    <property type="evidence" value="ECO:0007669"/>
    <property type="project" value="UniProtKB-SubCell"/>
</dbReference>
<dbReference type="GO" id="GO:0016758">
    <property type="term" value="F:hexosyltransferase activity"/>
    <property type="evidence" value="ECO:0000315"/>
    <property type="project" value="UniProtKB"/>
</dbReference>
<dbReference type="GO" id="GO:0016763">
    <property type="term" value="F:pentosyltransferase activity"/>
    <property type="evidence" value="ECO:0007669"/>
    <property type="project" value="TreeGrafter"/>
</dbReference>
<dbReference type="GO" id="GO:0009103">
    <property type="term" value="P:lipopolysaccharide biosynthetic process"/>
    <property type="evidence" value="ECO:0000315"/>
    <property type="project" value="UniProtKB"/>
</dbReference>
<dbReference type="GO" id="GO:0009244">
    <property type="term" value="P:lipopolysaccharide core region biosynthetic process"/>
    <property type="evidence" value="ECO:0007669"/>
    <property type="project" value="UniProtKB-UniPathway"/>
</dbReference>
<dbReference type="InterPro" id="IPR050297">
    <property type="entry name" value="LipidA_mod_glycosyltrf_83"/>
</dbReference>
<dbReference type="InterPro" id="IPR038731">
    <property type="entry name" value="RgtA/B/C-like"/>
</dbReference>
<dbReference type="PANTHER" id="PTHR33908">
    <property type="entry name" value="MANNOSYLTRANSFERASE YKCB-RELATED"/>
    <property type="match status" value="1"/>
</dbReference>
<dbReference type="PANTHER" id="PTHR33908:SF11">
    <property type="entry name" value="MEMBRANE PROTEIN"/>
    <property type="match status" value="1"/>
</dbReference>
<dbReference type="Pfam" id="PF13231">
    <property type="entry name" value="PMT_2"/>
    <property type="match status" value="1"/>
</dbReference>
<evidence type="ECO:0000255" key="1"/>
<evidence type="ECO:0000269" key="2">
    <source>
    </source>
</evidence>
<evidence type="ECO:0000269" key="3">
    <source>
    </source>
</evidence>
<evidence type="ECO:0000269" key="4">
    <source>
    </source>
</evidence>
<evidence type="ECO:0000303" key="5">
    <source>
    </source>
</evidence>
<evidence type="ECO:0000303" key="6">
    <source>
    </source>
</evidence>
<evidence type="ECO:0000305" key="7"/>
<evidence type="ECO:0000305" key="8">
    <source>
    </source>
</evidence>
<evidence type="ECO:0000305" key="9">
    <source>
    </source>
</evidence>
<evidence type="ECO:0000305" key="10">
    <source>
    </source>
</evidence>
<evidence type="ECO:0000312" key="11">
    <source>
        <dbReference type="EMBL" id="ABC02170.1"/>
    </source>
</evidence>
<evidence type="ECO:0000312" key="12">
    <source>
        <dbReference type="EMBL" id="CAK06963.1"/>
    </source>
</evidence>